<accession>Q3LWR6</accession>
<accession>O07832</accession>
<keyword id="KW-0010">Activator</keyword>
<keyword id="KW-0963">Cytoplasm</keyword>
<keyword id="KW-0238">DNA-binding</keyword>
<keyword id="KW-0597">Phosphoprotein</keyword>
<keyword id="KW-0804">Transcription</keyword>
<keyword id="KW-0805">Transcription regulation</keyword>
<keyword id="KW-0902">Two-component regulatory system</keyword>
<comment type="function">
    <text evidence="1">Member of the two-component regulatory system TodS/TodT involved in the regulation of toluene degradation. Phosphorylated TodT activates transcription of the tod operon (todXFC1C2BADEGIH) (By similarity).</text>
</comment>
<comment type="subcellular location">
    <subcellularLocation>
        <location evidence="1">Cytoplasm</location>
    </subcellularLocation>
</comment>
<comment type="PTM">
    <text evidence="1">Phosphorylated by TodS.</text>
</comment>
<comment type="sequence caution" evidence="4">
    <conflict type="erroneous initiation">
        <sequence resource="EMBL-CDS" id="ABA10819"/>
    </conflict>
    <text>Truncated N-terminus.</text>
</comment>
<organism>
    <name type="scientific">Pseudomonas putida</name>
    <name type="common">Arthrobacter siderocapsulatus</name>
    <dbReference type="NCBI Taxonomy" id="303"/>
    <lineage>
        <taxon>Bacteria</taxon>
        <taxon>Pseudomonadati</taxon>
        <taxon>Pseudomonadota</taxon>
        <taxon>Gammaproteobacteria</taxon>
        <taxon>Pseudomonadales</taxon>
        <taxon>Pseudomonadaceae</taxon>
        <taxon>Pseudomonas</taxon>
    </lineage>
</organism>
<feature type="chain" id="PRO_0000423595" description="Response regulator protein TodT">
    <location>
        <begin position="1"/>
        <end position="227"/>
    </location>
</feature>
<feature type="domain" description="Response regulatory" evidence="2">
    <location>
        <begin position="28"/>
        <end position="142"/>
    </location>
</feature>
<feature type="domain" description="HTH luxR-type" evidence="3">
    <location>
        <begin position="158"/>
        <end position="223"/>
    </location>
</feature>
<feature type="DNA-binding region" description="H-T-H motif" evidence="3">
    <location>
        <begin position="182"/>
        <end position="201"/>
    </location>
</feature>
<feature type="modified residue" description="4-aspartylphosphate" evidence="2">
    <location>
        <position position="77"/>
    </location>
</feature>
<sequence length="227" mass="25432">MPARWGCLFPGKYPCQTGLRHMSDRASVIYILDDDNAVLEALSSLVRSIGLSVECFSSASVFLNDVNRSACGCLILDVRMPEMSGLDVQRQLKELGEQIPIIFISGHGDIPMAVKAIKAGAVDFFTKPFREEELLGAIRAALKLAPQQRSNAPRVSELKENYESLSKREQQVLKFVLRGYLNKQTALELDISEATVKVHRHNIMRKMKVSSIQDLVRVTERLKDSLE</sequence>
<reference key="1">
    <citation type="submission" date="1999-08" db="EMBL/GenBank/DDBJ databases">
        <title>Pseudomonas putida tobC2 (partial), tobB, tobA, tobD, tobE, tobG, tobI, tobH, tobS, tobT, tobU genes.</title>
        <authorList>
            <person name="Li W."/>
            <person name="Tan H.M."/>
        </authorList>
    </citation>
    <scope>NUCLEOTIDE SEQUENCE [GENOMIC DNA]</scope>
    <source>
        <strain>PB4071</strain>
    </source>
</reference>
<reference key="2">
    <citation type="journal article" date="2006" name="J. Microbiol.">
        <title>Identification and expression of the cym, cmt, and tod catabolic genes from Pseudomonas putida KL47: expression of the regulatory todST genes as a factor for catabolic adaptation.</title>
        <authorList>
            <person name="Lee K."/>
            <person name="Ryu E.K."/>
            <person name="Choi K.S."/>
            <person name="Cho M.C."/>
            <person name="Jeong J.J."/>
            <person name="Choi E.N."/>
            <person name="Lee S.O."/>
            <person name="Yoon D.Y."/>
            <person name="Hwang I."/>
            <person name="Kim C.K."/>
        </authorList>
    </citation>
    <scope>NUCLEOTIDE SEQUENCE [GENOMIC DNA]</scope>
    <source>
        <strain>KL47</strain>
    </source>
</reference>
<protein>
    <recommendedName>
        <fullName>Response regulator protein TodT</fullName>
    </recommendedName>
</protein>
<dbReference type="EMBL" id="AF180147">
    <property type="protein sequence ID" value="AAG09418.1"/>
    <property type="molecule type" value="Genomic_DNA"/>
</dbReference>
<dbReference type="EMBL" id="DQ157469">
    <property type="protein sequence ID" value="ABA10819.1"/>
    <property type="status" value="ALT_INIT"/>
    <property type="molecule type" value="Genomic_DNA"/>
</dbReference>
<dbReference type="SMR" id="Q3LWR6"/>
<dbReference type="GO" id="GO:0005737">
    <property type="term" value="C:cytoplasm"/>
    <property type="evidence" value="ECO:0007669"/>
    <property type="project" value="UniProtKB-SubCell"/>
</dbReference>
<dbReference type="GO" id="GO:0003677">
    <property type="term" value="F:DNA binding"/>
    <property type="evidence" value="ECO:0007669"/>
    <property type="project" value="UniProtKB-KW"/>
</dbReference>
<dbReference type="GO" id="GO:0000160">
    <property type="term" value="P:phosphorelay signal transduction system"/>
    <property type="evidence" value="ECO:0007669"/>
    <property type="project" value="UniProtKB-KW"/>
</dbReference>
<dbReference type="GO" id="GO:0006355">
    <property type="term" value="P:regulation of DNA-templated transcription"/>
    <property type="evidence" value="ECO:0007669"/>
    <property type="project" value="InterPro"/>
</dbReference>
<dbReference type="CDD" id="cd06170">
    <property type="entry name" value="LuxR_C_like"/>
    <property type="match status" value="1"/>
</dbReference>
<dbReference type="CDD" id="cd17537">
    <property type="entry name" value="REC_FixJ"/>
    <property type="match status" value="1"/>
</dbReference>
<dbReference type="FunFam" id="3.40.50.2300:FF:000018">
    <property type="entry name" value="DNA-binding transcriptional regulator NtrC"/>
    <property type="match status" value="1"/>
</dbReference>
<dbReference type="FunFam" id="1.10.10.10:FF:000876">
    <property type="entry name" value="Response regulator protein TodT"/>
    <property type="match status" value="1"/>
</dbReference>
<dbReference type="Gene3D" id="3.40.50.2300">
    <property type="match status" value="1"/>
</dbReference>
<dbReference type="Gene3D" id="1.10.10.10">
    <property type="entry name" value="Winged helix-like DNA-binding domain superfamily/Winged helix DNA-binding domain"/>
    <property type="match status" value="1"/>
</dbReference>
<dbReference type="InterPro" id="IPR011006">
    <property type="entry name" value="CheY-like_superfamily"/>
</dbReference>
<dbReference type="InterPro" id="IPR016032">
    <property type="entry name" value="Sig_transdc_resp-reg_C-effctor"/>
</dbReference>
<dbReference type="InterPro" id="IPR001789">
    <property type="entry name" value="Sig_transdc_resp-reg_receiver"/>
</dbReference>
<dbReference type="InterPro" id="IPR000792">
    <property type="entry name" value="Tscrpt_reg_LuxR_C"/>
</dbReference>
<dbReference type="InterPro" id="IPR036388">
    <property type="entry name" value="WH-like_DNA-bd_sf"/>
</dbReference>
<dbReference type="PANTHER" id="PTHR44688">
    <property type="entry name" value="DNA-BINDING TRANSCRIPTIONAL ACTIVATOR DEVR_DOSR"/>
    <property type="match status" value="1"/>
</dbReference>
<dbReference type="PANTHER" id="PTHR44688:SF16">
    <property type="entry name" value="DNA-BINDING TRANSCRIPTIONAL ACTIVATOR DEVR_DOSR"/>
    <property type="match status" value="1"/>
</dbReference>
<dbReference type="Pfam" id="PF00196">
    <property type="entry name" value="GerE"/>
    <property type="match status" value="1"/>
</dbReference>
<dbReference type="Pfam" id="PF00072">
    <property type="entry name" value="Response_reg"/>
    <property type="match status" value="1"/>
</dbReference>
<dbReference type="PRINTS" id="PR00038">
    <property type="entry name" value="HTHLUXR"/>
</dbReference>
<dbReference type="SMART" id="SM00421">
    <property type="entry name" value="HTH_LUXR"/>
    <property type="match status" value="1"/>
</dbReference>
<dbReference type="SMART" id="SM00448">
    <property type="entry name" value="REC"/>
    <property type="match status" value="1"/>
</dbReference>
<dbReference type="SUPFAM" id="SSF46894">
    <property type="entry name" value="C-terminal effector domain of the bipartite response regulators"/>
    <property type="match status" value="1"/>
</dbReference>
<dbReference type="SUPFAM" id="SSF52172">
    <property type="entry name" value="CheY-like"/>
    <property type="match status" value="1"/>
</dbReference>
<dbReference type="PROSITE" id="PS50043">
    <property type="entry name" value="HTH_LUXR_2"/>
    <property type="match status" value="1"/>
</dbReference>
<dbReference type="PROSITE" id="PS50110">
    <property type="entry name" value="RESPONSE_REGULATORY"/>
    <property type="match status" value="1"/>
</dbReference>
<name>TODT_PSEPU</name>
<evidence type="ECO:0000250" key="1"/>
<evidence type="ECO:0000255" key="2">
    <source>
        <dbReference type="PROSITE-ProRule" id="PRU00169"/>
    </source>
</evidence>
<evidence type="ECO:0000255" key="3">
    <source>
        <dbReference type="PROSITE-ProRule" id="PRU00411"/>
    </source>
</evidence>
<evidence type="ECO:0000305" key="4"/>
<gene>
    <name type="primary">todT</name>
    <name type="synonym">tobT</name>
</gene>
<proteinExistence type="inferred from homology"/>